<protein>
    <recommendedName>
        <fullName>Actin, macronuclear</fullName>
        <ecNumber evidence="1">3.6.4.-</ecNumber>
    </recommendedName>
</protein>
<feature type="chain" id="PRO_0000088974" description="Actin, macronuclear">
    <location>
        <begin position="1"/>
        <end position="357"/>
    </location>
</feature>
<keyword id="KW-0067">ATP-binding</keyword>
<keyword id="KW-0963">Cytoplasm</keyword>
<keyword id="KW-0206">Cytoskeleton</keyword>
<keyword id="KW-0378">Hydrolase</keyword>
<keyword id="KW-0547">Nucleotide-binding</keyword>
<name>ACT1_OXYFA</name>
<accession>P53503</accession>
<proteinExistence type="inferred from homology"/>
<reference key="1">
    <citation type="journal article" date="1982" name="Nature">
        <title>Nucleotide sequence of a macronuclear gene for actin in Oxytricha fallax.</title>
        <authorList>
            <person name="Kaine B.P."/>
            <person name="Spear B.B."/>
        </authorList>
    </citation>
    <scope>NUCLEOTIDE SEQUENCE [GENOMIC DNA]</scope>
</reference>
<organism>
    <name type="scientific">Oxytricha fallax</name>
    <dbReference type="NCBI Taxonomy" id="5944"/>
    <lineage>
        <taxon>Eukaryota</taxon>
        <taxon>Sar</taxon>
        <taxon>Alveolata</taxon>
        <taxon>Ciliophora</taxon>
        <taxon>Intramacronucleata</taxon>
        <taxon>Spirotrichea</taxon>
        <taxon>Stichotrichia</taxon>
        <taxon>Sporadotrichida</taxon>
        <taxon>Oxytrichidae</taxon>
        <taxon>Oxytrichinae</taxon>
        <taxon>Oxytricha</taxon>
    </lineage>
</organism>
<sequence>MSDQQTCVIDNGSGVVKAGFAGEDAPRAVFPSIVGRPKNVSALIGVDSASEYLGDEAQQKRGVLKIWNHTFYVELRVQPDEHPILLTEAPLSPKTNREKMTQIIFETFNLPALYVAIQAVLSLYSRGRTTGIVCDAGDGLTHTVPIYEGFSIPHAVSTIQLAGRDLTTFLAKLFTERGYNFTSSAELEIVRDIKEKLCFLALNYESALKQSHDSSQFEKNYELPHGKVITIGSERFRCPEYLFKPLEMNGRELDSIQDLTYKSIQECDVDVRRDLYQNIILSGGTTMYEGIGERLLKEIENRAPKSINVKVIASPDRRFAVWRGGSTLTSLSTFASMWITKEDYDENGASIVHRKCI</sequence>
<dbReference type="EC" id="3.6.4.-" evidence="1"/>
<dbReference type="EMBL" id="J01163">
    <property type="protein sequence ID" value="AAA29394.1"/>
    <property type="molecule type" value="Genomic_DNA"/>
</dbReference>
<dbReference type="SMR" id="P53503"/>
<dbReference type="GO" id="GO:0005737">
    <property type="term" value="C:cytoplasm"/>
    <property type="evidence" value="ECO:0007669"/>
    <property type="project" value="UniProtKB-KW"/>
</dbReference>
<dbReference type="GO" id="GO:0005856">
    <property type="term" value="C:cytoskeleton"/>
    <property type="evidence" value="ECO:0007669"/>
    <property type="project" value="UniProtKB-SubCell"/>
</dbReference>
<dbReference type="GO" id="GO:0005524">
    <property type="term" value="F:ATP binding"/>
    <property type="evidence" value="ECO:0007669"/>
    <property type="project" value="UniProtKB-KW"/>
</dbReference>
<dbReference type="GO" id="GO:0016787">
    <property type="term" value="F:hydrolase activity"/>
    <property type="evidence" value="ECO:0007669"/>
    <property type="project" value="UniProtKB-KW"/>
</dbReference>
<dbReference type="FunFam" id="3.30.420.40:FF:000148">
    <property type="entry name" value="Actin, alpha skeletal muscle"/>
    <property type="match status" value="1"/>
</dbReference>
<dbReference type="FunFam" id="3.90.640.10:FF:000047">
    <property type="entry name" value="Actin, alpha skeletal muscle"/>
    <property type="match status" value="1"/>
</dbReference>
<dbReference type="FunFam" id="3.30.420.40:FF:000058">
    <property type="entry name" value="Putative actin-related protein 5"/>
    <property type="match status" value="1"/>
</dbReference>
<dbReference type="Gene3D" id="3.30.420.40">
    <property type="match status" value="2"/>
</dbReference>
<dbReference type="Gene3D" id="3.90.640.10">
    <property type="entry name" value="Actin, Chain A, domain 4"/>
    <property type="match status" value="1"/>
</dbReference>
<dbReference type="InterPro" id="IPR004000">
    <property type="entry name" value="Actin"/>
</dbReference>
<dbReference type="InterPro" id="IPR020902">
    <property type="entry name" value="Actin/actin-like_CS"/>
</dbReference>
<dbReference type="InterPro" id="IPR004001">
    <property type="entry name" value="Actin_CS"/>
</dbReference>
<dbReference type="InterPro" id="IPR043129">
    <property type="entry name" value="ATPase_NBD"/>
</dbReference>
<dbReference type="PANTHER" id="PTHR11937">
    <property type="entry name" value="ACTIN"/>
    <property type="match status" value="1"/>
</dbReference>
<dbReference type="Pfam" id="PF00022">
    <property type="entry name" value="Actin"/>
    <property type="match status" value="1"/>
</dbReference>
<dbReference type="PRINTS" id="PR00190">
    <property type="entry name" value="ACTIN"/>
</dbReference>
<dbReference type="SMART" id="SM00268">
    <property type="entry name" value="ACTIN"/>
    <property type="match status" value="1"/>
</dbReference>
<dbReference type="SUPFAM" id="SSF53067">
    <property type="entry name" value="Actin-like ATPase domain"/>
    <property type="match status" value="2"/>
</dbReference>
<dbReference type="PROSITE" id="PS00406">
    <property type="entry name" value="ACTINS_1"/>
    <property type="match status" value="1"/>
</dbReference>
<dbReference type="PROSITE" id="PS00432">
    <property type="entry name" value="ACTINS_2"/>
    <property type="match status" value="1"/>
</dbReference>
<dbReference type="PROSITE" id="PS01132">
    <property type="entry name" value="ACTINS_ACT_LIKE"/>
    <property type="match status" value="1"/>
</dbReference>
<evidence type="ECO:0000250" key="1">
    <source>
        <dbReference type="UniProtKB" id="P68137"/>
    </source>
</evidence>
<evidence type="ECO:0000305" key="2"/>
<comment type="function">
    <text>Actins are highly conserved proteins that are involved in various types of cell motility and are ubiquitously expressed in all eukaryotic cells.</text>
</comment>
<comment type="catalytic activity">
    <reaction evidence="1">
        <text>ATP + H2O = ADP + phosphate + H(+)</text>
        <dbReference type="Rhea" id="RHEA:13065"/>
        <dbReference type="ChEBI" id="CHEBI:15377"/>
        <dbReference type="ChEBI" id="CHEBI:15378"/>
        <dbReference type="ChEBI" id="CHEBI:30616"/>
        <dbReference type="ChEBI" id="CHEBI:43474"/>
        <dbReference type="ChEBI" id="CHEBI:456216"/>
    </reaction>
</comment>
<comment type="subcellular location">
    <subcellularLocation>
        <location>Cytoplasm</location>
        <location>Cytoskeleton</location>
    </subcellularLocation>
</comment>
<comment type="PTM">
    <text>Met-1 may be removed after translation.</text>
</comment>
<comment type="similarity">
    <text evidence="2">Belongs to the actin family.</text>
</comment>